<feature type="chain" id="PRO_0000388834" description="UPF0756 membrane protein YtwI">
    <location>
        <begin position="1"/>
        <end position="154"/>
    </location>
</feature>
<feature type="transmembrane region" description="Helical" evidence="1">
    <location>
        <begin position="8"/>
        <end position="28"/>
    </location>
</feature>
<feature type="transmembrane region" description="Helical" evidence="1">
    <location>
        <begin position="54"/>
        <end position="74"/>
    </location>
</feature>
<feature type="transmembrane region" description="Helical" evidence="1">
    <location>
        <begin position="87"/>
        <end position="107"/>
    </location>
</feature>
<feature type="transmembrane region" description="Helical" evidence="1">
    <location>
        <begin position="117"/>
        <end position="137"/>
    </location>
</feature>
<sequence length="154" mass="16066">MFTQANLFLILLLAIALIAKNQSLLFAVSVLLIIKIVGLDQKLFPTIQSKGINWGVTIITIAVLVPIATGEIGFKQLGEAMRSSYAWIALGAGIAVALIAKNGLTLLENDPHITTALVIGTILAVALFGGVAVGPLIGAGIAYLAMQIVKLFTS</sequence>
<comment type="subcellular location">
    <subcellularLocation>
        <location evidence="1">Cell membrane</location>
        <topology evidence="1">Multi-pass membrane protein</topology>
    </subcellularLocation>
</comment>
<comment type="similarity">
    <text evidence="1">Belongs to the UPF0756 family.</text>
</comment>
<proteinExistence type="inferred from homology"/>
<accession>O34811</accession>
<accession>Q795V5</accession>
<reference key="1">
    <citation type="journal article" date="1997" name="Microbiology">
        <title>Sequencing and functional annotation of the Bacillus subtilis genes in the 200 kb rrnB-dnaB region.</title>
        <authorList>
            <person name="Lapidus A."/>
            <person name="Galleron N."/>
            <person name="Sorokin A."/>
            <person name="Ehrlich S.D."/>
        </authorList>
    </citation>
    <scope>NUCLEOTIDE SEQUENCE [GENOMIC DNA]</scope>
    <source>
        <strain>168</strain>
    </source>
</reference>
<reference key="2">
    <citation type="journal article" date="1997" name="Nature">
        <title>The complete genome sequence of the Gram-positive bacterium Bacillus subtilis.</title>
        <authorList>
            <person name="Kunst F."/>
            <person name="Ogasawara N."/>
            <person name="Moszer I."/>
            <person name="Albertini A.M."/>
            <person name="Alloni G."/>
            <person name="Azevedo V."/>
            <person name="Bertero M.G."/>
            <person name="Bessieres P."/>
            <person name="Bolotin A."/>
            <person name="Borchert S."/>
            <person name="Borriss R."/>
            <person name="Boursier L."/>
            <person name="Brans A."/>
            <person name="Braun M."/>
            <person name="Brignell S.C."/>
            <person name="Bron S."/>
            <person name="Brouillet S."/>
            <person name="Bruschi C.V."/>
            <person name="Caldwell B."/>
            <person name="Capuano V."/>
            <person name="Carter N.M."/>
            <person name="Choi S.-K."/>
            <person name="Codani J.-J."/>
            <person name="Connerton I.F."/>
            <person name="Cummings N.J."/>
            <person name="Daniel R.A."/>
            <person name="Denizot F."/>
            <person name="Devine K.M."/>
            <person name="Duesterhoeft A."/>
            <person name="Ehrlich S.D."/>
            <person name="Emmerson P.T."/>
            <person name="Entian K.-D."/>
            <person name="Errington J."/>
            <person name="Fabret C."/>
            <person name="Ferrari E."/>
            <person name="Foulger D."/>
            <person name="Fritz C."/>
            <person name="Fujita M."/>
            <person name="Fujita Y."/>
            <person name="Fuma S."/>
            <person name="Galizzi A."/>
            <person name="Galleron N."/>
            <person name="Ghim S.-Y."/>
            <person name="Glaser P."/>
            <person name="Goffeau A."/>
            <person name="Golightly E.J."/>
            <person name="Grandi G."/>
            <person name="Guiseppi G."/>
            <person name="Guy B.J."/>
            <person name="Haga K."/>
            <person name="Haiech J."/>
            <person name="Harwood C.R."/>
            <person name="Henaut A."/>
            <person name="Hilbert H."/>
            <person name="Holsappel S."/>
            <person name="Hosono S."/>
            <person name="Hullo M.-F."/>
            <person name="Itaya M."/>
            <person name="Jones L.-M."/>
            <person name="Joris B."/>
            <person name="Karamata D."/>
            <person name="Kasahara Y."/>
            <person name="Klaerr-Blanchard M."/>
            <person name="Klein C."/>
            <person name="Kobayashi Y."/>
            <person name="Koetter P."/>
            <person name="Koningstein G."/>
            <person name="Krogh S."/>
            <person name="Kumano M."/>
            <person name="Kurita K."/>
            <person name="Lapidus A."/>
            <person name="Lardinois S."/>
            <person name="Lauber J."/>
            <person name="Lazarevic V."/>
            <person name="Lee S.-M."/>
            <person name="Levine A."/>
            <person name="Liu H."/>
            <person name="Masuda S."/>
            <person name="Mauel C."/>
            <person name="Medigue C."/>
            <person name="Medina N."/>
            <person name="Mellado R.P."/>
            <person name="Mizuno M."/>
            <person name="Moestl D."/>
            <person name="Nakai S."/>
            <person name="Noback M."/>
            <person name="Noone D."/>
            <person name="O'Reilly M."/>
            <person name="Ogawa K."/>
            <person name="Ogiwara A."/>
            <person name="Oudega B."/>
            <person name="Park S.-H."/>
            <person name="Parro V."/>
            <person name="Pohl T.M."/>
            <person name="Portetelle D."/>
            <person name="Porwollik S."/>
            <person name="Prescott A.M."/>
            <person name="Presecan E."/>
            <person name="Pujic P."/>
            <person name="Purnelle B."/>
            <person name="Rapoport G."/>
            <person name="Rey M."/>
            <person name="Reynolds S."/>
            <person name="Rieger M."/>
            <person name="Rivolta C."/>
            <person name="Rocha E."/>
            <person name="Roche B."/>
            <person name="Rose M."/>
            <person name="Sadaie Y."/>
            <person name="Sato T."/>
            <person name="Scanlan E."/>
            <person name="Schleich S."/>
            <person name="Schroeter R."/>
            <person name="Scoffone F."/>
            <person name="Sekiguchi J."/>
            <person name="Sekowska A."/>
            <person name="Seror S.J."/>
            <person name="Serror P."/>
            <person name="Shin B.-S."/>
            <person name="Soldo B."/>
            <person name="Sorokin A."/>
            <person name="Tacconi E."/>
            <person name="Takagi T."/>
            <person name="Takahashi H."/>
            <person name="Takemaru K."/>
            <person name="Takeuchi M."/>
            <person name="Tamakoshi A."/>
            <person name="Tanaka T."/>
            <person name="Terpstra P."/>
            <person name="Tognoni A."/>
            <person name="Tosato V."/>
            <person name="Uchiyama S."/>
            <person name="Vandenbol M."/>
            <person name="Vannier F."/>
            <person name="Vassarotti A."/>
            <person name="Viari A."/>
            <person name="Wambutt R."/>
            <person name="Wedler E."/>
            <person name="Wedler H."/>
            <person name="Weitzenegger T."/>
            <person name="Winters P."/>
            <person name="Wipat A."/>
            <person name="Yamamoto H."/>
            <person name="Yamane K."/>
            <person name="Yasumoto K."/>
            <person name="Yata K."/>
            <person name="Yoshida K."/>
            <person name="Yoshikawa H.-F."/>
            <person name="Zumstein E."/>
            <person name="Yoshikawa H."/>
            <person name="Danchin A."/>
        </authorList>
    </citation>
    <scope>NUCLEOTIDE SEQUENCE [LARGE SCALE GENOMIC DNA]</scope>
    <source>
        <strain>168</strain>
    </source>
</reference>
<evidence type="ECO:0000255" key="1">
    <source>
        <dbReference type="HAMAP-Rule" id="MF_01874"/>
    </source>
</evidence>
<protein>
    <recommendedName>
        <fullName evidence="1">UPF0756 membrane protein YtwI</fullName>
    </recommendedName>
</protein>
<keyword id="KW-1003">Cell membrane</keyword>
<keyword id="KW-0472">Membrane</keyword>
<keyword id="KW-1185">Reference proteome</keyword>
<keyword id="KW-0812">Transmembrane</keyword>
<keyword id="KW-1133">Transmembrane helix</keyword>
<dbReference type="EMBL" id="AF008220">
    <property type="protein sequence ID" value="AAC00344.1"/>
    <property type="molecule type" value="Genomic_DNA"/>
</dbReference>
<dbReference type="EMBL" id="AL009126">
    <property type="protein sequence ID" value="CAB14875.1"/>
    <property type="molecule type" value="Genomic_DNA"/>
</dbReference>
<dbReference type="PIR" id="F70002">
    <property type="entry name" value="F70002"/>
</dbReference>
<dbReference type="RefSeq" id="NP_390793.1">
    <property type="nucleotide sequence ID" value="NC_000964.3"/>
</dbReference>
<dbReference type="RefSeq" id="WP_004398695.1">
    <property type="nucleotide sequence ID" value="NZ_OZ025638.1"/>
</dbReference>
<dbReference type="SMR" id="O34811"/>
<dbReference type="FunCoup" id="O34811">
    <property type="interactions" value="6"/>
</dbReference>
<dbReference type="STRING" id="224308.BSU29150"/>
<dbReference type="PaxDb" id="224308-BSU29150"/>
<dbReference type="EnsemblBacteria" id="CAB14875">
    <property type="protein sequence ID" value="CAB14875"/>
    <property type="gene ID" value="BSU_29150"/>
</dbReference>
<dbReference type="GeneID" id="935947"/>
<dbReference type="KEGG" id="bsu:BSU29150"/>
<dbReference type="PATRIC" id="fig|224308.179.peg.3165"/>
<dbReference type="eggNOG" id="COG2707">
    <property type="taxonomic scope" value="Bacteria"/>
</dbReference>
<dbReference type="InParanoid" id="O34811"/>
<dbReference type="OrthoDB" id="80306at2"/>
<dbReference type="PhylomeDB" id="O34811"/>
<dbReference type="BioCyc" id="BSUB:BSU29150-MONOMER"/>
<dbReference type="Proteomes" id="UP000001570">
    <property type="component" value="Chromosome"/>
</dbReference>
<dbReference type="GO" id="GO:0005886">
    <property type="term" value="C:plasma membrane"/>
    <property type="evidence" value="ECO:0000318"/>
    <property type="project" value="GO_Central"/>
</dbReference>
<dbReference type="HAMAP" id="MF_01874">
    <property type="entry name" value="UPF0756"/>
    <property type="match status" value="1"/>
</dbReference>
<dbReference type="InterPro" id="IPR007382">
    <property type="entry name" value="UPF0756_TM"/>
</dbReference>
<dbReference type="PANTHER" id="PTHR38452">
    <property type="entry name" value="UPF0756 MEMBRANE PROTEIN YEAL"/>
    <property type="match status" value="1"/>
</dbReference>
<dbReference type="PANTHER" id="PTHR38452:SF1">
    <property type="entry name" value="UPF0756 MEMBRANE PROTEIN YEAL"/>
    <property type="match status" value="1"/>
</dbReference>
<dbReference type="Pfam" id="PF04284">
    <property type="entry name" value="DUF441"/>
    <property type="match status" value="1"/>
</dbReference>
<gene>
    <name type="primary">ytwI</name>
    <name type="ordered locus">BSU29150</name>
</gene>
<organism>
    <name type="scientific">Bacillus subtilis (strain 168)</name>
    <dbReference type="NCBI Taxonomy" id="224308"/>
    <lineage>
        <taxon>Bacteria</taxon>
        <taxon>Bacillati</taxon>
        <taxon>Bacillota</taxon>
        <taxon>Bacilli</taxon>
        <taxon>Bacillales</taxon>
        <taxon>Bacillaceae</taxon>
        <taxon>Bacillus</taxon>
    </lineage>
</organism>
<name>YTWI_BACSU</name>